<proteinExistence type="inferred from homology"/>
<keyword id="KW-0030">Aminoacyl-tRNA synthetase</keyword>
<keyword id="KW-0067">ATP-binding</keyword>
<keyword id="KW-0963">Cytoplasm</keyword>
<keyword id="KW-0436">Ligase</keyword>
<keyword id="KW-0479">Metal-binding</keyword>
<keyword id="KW-0547">Nucleotide-binding</keyword>
<keyword id="KW-0648">Protein biosynthesis</keyword>
<keyword id="KW-1185">Reference proteome</keyword>
<keyword id="KW-0862">Zinc</keyword>
<protein>
    <recommendedName>
        <fullName evidence="1">Isoleucine--tRNA ligase 2</fullName>
        <ecNumber evidence="1">6.1.1.5</ecNumber>
    </recommendedName>
    <alternativeName>
        <fullName evidence="1">Isoleucyl-tRNA synthetase 2</fullName>
        <shortName evidence="1">IleRS 2</shortName>
    </alternativeName>
</protein>
<gene>
    <name evidence="1" type="primary">ileS2</name>
    <name type="ordered locus">BC_2164</name>
</gene>
<name>SYI2_BACCR</name>
<feature type="chain" id="PRO_0000098517" description="Isoleucine--tRNA ligase 2">
    <location>
        <begin position="1"/>
        <end position="1033"/>
    </location>
</feature>
<feature type="short sequence motif" description="'HIGH' region">
    <location>
        <begin position="47"/>
        <end position="57"/>
    </location>
</feature>
<feature type="short sequence motif" description="'KMSKS' region">
    <location>
        <begin position="590"/>
        <end position="594"/>
    </location>
</feature>
<feature type="binding site" evidence="1">
    <location>
        <position position="593"/>
    </location>
    <ligand>
        <name>ATP</name>
        <dbReference type="ChEBI" id="CHEBI:30616"/>
    </ligand>
</feature>
<accession>Q81E30</accession>
<dbReference type="EC" id="6.1.1.5" evidence="1"/>
<dbReference type="EMBL" id="AE016877">
    <property type="protein sequence ID" value="AAP09130.1"/>
    <property type="status" value="ALT_INIT"/>
    <property type="molecule type" value="Genomic_DNA"/>
</dbReference>
<dbReference type="RefSeq" id="NP_831929.1">
    <property type="nucleotide sequence ID" value="NC_004722.1"/>
</dbReference>
<dbReference type="SMR" id="Q81E30"/>
<dbReference type="STRING" id="226900.BC_2164"/>
<dbReference type="KEGG" id="bce:BC2164"/>
<dbReference type="PATRIC" id="fig|226900.8.peg.2186"/>
<dbReference type="HOGENOM" id="CLU_001493_1_1_9"/>
<dbReference type="OrthoDB" id="9810365at2"/>
<dbReference type="Proteomes" id="UP000001417">
    <property type="component" value="Chromosome"/>
</dbReference>
<dbReference type="GO" id="GO:0005737">
    <property type="term" value="C:cytoplasm"/>
    <property type="evidence" value="ECO:0007669"/>
    <property type="project" value="UniProtKB-SubCell"/>
</dbReference>
<dbReference type="GO" id="GO:0002161">
    <property type="term" value="F:aminoacyl-tRNA deacylase activity"/>
    <property type="evidence" value="ECO:0007669"/>
    <property type="project" value="InterPro"/>
</dbReference>
<dbReference type="GO" id="GO:0005524">
    <property type="term" value="F:ATP binding"/>
    <property type="evidence" value="ECO:0007669"/>
    <property type="project" value="UniProtKB-UniRule"/>
</dbReference>
<dbReference type="GO" id="GO:0004822">
    <property type="term" value="F:isoleucine-tRNA ligase activity"/>
    <property type="evidence" value="ECO:0000318"/>
    <property type="project" value="GO_Central"/>
</dbReference>
<dbReference type="GO" id="GO:0000049">
    <property type="term" value="F:tRNA binding"/>
    <property type="evidence" value="ECO:0007669"/>
    <property type="project" value="InterPro"/>
</dbReference>
<dbReference type="GO" id="GO:0008270">
    <property type="term" value="F:zinc ion binding"/>
    <property type="evidence" value="ECO:0007669"/>
    <property type="project" value="UniProtKB-UniRule"/>
</dbReference>
<dbReference type="GO" id="GO:0006428">
    <property type="term" value="P:isoleucyl-tRNA aminoacylation"/>
    <property type="evidence" value="ECO:0000318"/>
    <property type="project" value="GO_Central"/>
</dbReference>
<dbReference type="CDD" id="cd07961">
    <property type="entry name" value="Anticodon_Ia_Ile_ABEc"/>
    <property type="match status" value="1"/>
</dbReference>
<dbReference type="CDD" id="cd00818">
    <property type="entry name" value="IleRS_core"/>
    <property type="match status" value="1"/>
</dbReference>
<dbReference type="FunFam" id="1.10.730.10:FF:000038">
    <property type="entry name" value="Isoleucine--tRNA ligase"/>
    <property type="match status" value="1"/>
</dbReference>
<dbReference type="FunFam" id="3.40.50.620:FF:000063">
    <property type="entry name" value="Isoleucine--tRNA ligase"/>
    <property type="match status" value="1"/>
</dbReference>
<dbReference type="FunFam" id="3.40.50.620:FF:000075">
    <property type="entry name" value="Isoleucine--tRNA ligase"/>
    <property type="match status" value="1"/>
</dbReference>
<dbReference type="Gene3D" id="3.40.50.620">
    <property type="entry name" value="HUPs"/>
    <property type="match status" value="2"/>
</dbReference>
<dbReference type="Gene3D" id="1.10.730.10">
    <property type="entry name" value="Isoleucyl-tRNA Synthetase, Domain 1"/>
    <property type="match status" value="1"/>
</dbReference>
<dbReference type="HAMAP" id="MF_02003">
    <property type="entry name" value="Ile_tRNA_synth_type2"/>
    <property type="match status" value="1"/>
</dbReference>
<dbReference type="InterPro" id="IPR001412">
    <property type="entry name" value="aa-tRNA-synth_I_CS"/>
</dbReference>
<dbReference type="InterPro" id="IPR002300">
    <property type="entry name" value="aa-tRNA-synth_Ia"/>
</dbReference>
<dbReference type="InterPro" id="IPR033709">
    <property type="entry name" value="Anticodon_Ile_ABEc"/>
</dbReference>
<dbReference type="InterPro" id="IPR002301">
    <property type="entry name" value="Ile-tRNA-ligase"/>
</dbReference>
<dbReference type="InterPro" id="IPR023586">
    <property type="entry name" value="Ile-tRNA-ligase_type2"/>
</dbReference>
<dbReference type="InterPro" id="IPR013155">
    <property type="entry name" value="M/V/L/I-tRNA-synth_anticd-bd"/>
</dbReference>
<dbReference type="InterPro" id="IPR014729">
    <property type="entry name" value="Rossmann-like_a/b/a_fold"/>
</dbReference>
<dbReference type="InterPro" id="IPR009080">
    <property type="entry name" value="tRNAsynth_Ia_anticodon-bd"/>
</dbReference>
<dbReference type="InterPro" id="IPR009008">
    <property type="entry name" value="Val/Leu/Ile-tRNA-synth_edit"/>
</dbReference>
<dbReference type="NCBIfam" id="TIGR00392">
    <property type="entry name" value="ileS"/>
    <property type="match status" value="1"/>
</dbReference>
<dbReference type="PANTHER" id="PTHR42780:SF1">
    <property type="entry name" value="ISOLEUCINE--TRNA LIGASE, CYTOPLASMIC"/>
    <property type="match status" value="1"/>
</dbReference>
<dbReference type="PANTHER" id="PTHR42780">
    <property type="entry name" value="SOLEUCYL-TRNA SYNTHETASE"/>
    <property type="match status" value="1"/>
</dbReference>
<dbReference type="Pfam" id="PF08264">
    <property type="entry name" value="Anticodon_1"/>
    <property type="match status" value="1"/>
</dbReference>
<dbReference type="Pfam" id="PF19302">
    <property type="entry name" value="DUF5915"/>
    <property type="match status" value="1"/>
</dbReference>
<dbReference type="Pfam" id="PF00133">
    <property type="entry name" value="tRNA-synt_1"/>
    <property type="match status" value="1"/>
</dbReference>
<dbReference type="PRINTS" id="PR00984">
    <property type="entry name" value="TRNASYNTHILE"/>
</dbReference>
<dbReference type="SUPFAM" id="SSF47323">
    <property type="entry name" value="Anticodon-binding domain of a subclass of class I aminoacyl-tRNA synthetases"/>
    <property type="match status" value="2"/>
</dbReference>
<dbReference type="SUPFAM" id="SSF52374">
    <property type="entry name" value="Nucleotidylyl transferase"/>
    <property type="match status" value="1"/>
</dbReference>
<dbReference type="SUPFAM" id="SSF50677">
    <property type="entry name" value="ValRS/IleRS/LeuRS editing domain"/>
    <property type="match status" value="1"/>
</dbReference>
<dbReference type="PROSITE" id="PS00178">
    <property type="entry name" value="AA_TRNA_LIGASE_I"/>
    <property type="match status" value="1"/>
</dbReference>
<reference key="1">
    <citation type="journal article" date="2003" name="Nature">
        <title>Genome sequence of Bacillus cereus and comparative analysis with Bacillus anthracis.</title>
        <authorList>
            <person name="Ivanova N."/>
            <person name="Sorokin A."/>
            <person name="Anderson I."/>
            <person name="Galleron N."/>
            <person name="Candelon B."/>
            <person name="Kapatral V."/>
            <person name="Bhattacharyya A."/>
            <person name="Reznik G."/>
            <person name="Mikhailova N."/>
            <person name="Lapidus A."/>
            <person name="Chu L."/>
            <person name="Mazur M."/>
            <person name="Goltsman E."/>
            <person name="Larsen N."/>
            <person name="D'Souza M."/>
            <person name="Walunas T."/>
            <person name="Grechkin Y."/>
            <person name="Pusch G."/>
            <person name="Haselkorn R."/>
            <person name="Fonstein M."/>
            <person name="Ehrlich S.D."/>
            <person name="Overbeek R."/>
            <person name="Kyrpides N.C."/>
        </authorList>
    </citation>
    <scope>NUCLEOTIDE SEQUENCE [LARGE SCALE GENOMIC DNA]</scope>
    <source>
        <strain>ATCC 14579 / DSM 31 / CCUG 7414 / JCM 2152 / NBRC 15305 / NCIMB 9373 / NCTC 2599 / NRRL B-3711</strain>
    </source>
</reference>
<organism>
    <name type="scientific">Bacillus cereus (strain ATCC 14579 / DSM 31 / CCUG 7414 / JCM 2152 / NBRC 15305 / NCIMB 9373 / NCTC 2599 / NRRL B-3711)</name>
    <dbReference type="NCBI Taxonomy" id="226900"/>
    <lineage>
        <taxon>Bacteria</taxon>
        <taxon>Bacillati</taxon>
        <taxon>Bacillota</taxon>
        <taxon>Bacilli</taxon>
        <taxon>Bacillales</taxon>
        <taxon>Bacillaceae</taxon>
        <taxon>Bacillus</taxon>
        <taxon>Bacillus cereus group</taxon>
    </lineage>
</organism>
<evidence type="ECO:0000255" key="1">
    <source>
        <dbReference type="HAMAP-Rule" id="MF_02003"/>
    </source>
</evidence>
<evidence type="ECO:0000305" key="2"/>
<sequence>MEKVDVKESAVGREMRIRKQWNEQNIFEQSIQNREGAQSFVFYEGPPTANGLPHVGHALGRTIKDLVARYKTMAGYKVLRKAGWDTHGLPVELGVEKQLGISGKHEIEEYGIEPFIQKCKESVFTYEKQWREFTESIGYWVDMDDPYVTLKNPYIESVWHILGTIHEKGLLYKGHRVSPYCPSCQTSLSSHEVAQGYKTVKDLSATVKFKVKDSENEYFLGWTTTPWTLPANVALAVHPNMEYVKAKQESHVYIVAKERVQEVLKENYEVLSVHKGEELLNTSYTAPFPMKEVTNGYRVIAADFVTGDSGTGLVHIAPAYGEDDYRVVQSEGLSFLHVVDEKGEYTEAVPFLKGKFVKDCDVDIVRYLAKEGLLYHKEKYEHSYPHCWRCDSPLLYYAGESWLIRTTAIKDTFLQNNDSVTWYPDHMKHGRFGKFLENMVDWNISRNRYWGTPLNVWECESCDHQFAPKSIAELRKHSTKETPEDLELHKPYVDEVQVCCGKCGGTMNRTPEVIDVWFDSGSMPFAQYHYPFENKELFEEQFPADVIAEGIDQTRGWFYSLLAVSALYTGKVPYKRVLSLGHVLDEEGQKMSKSKGNALDPVDLVDKFGADALRWALLVDSAPWNAKRFSERTVLEAKSKFVDTLVNVYSFYVLYANLDEYNPKETYDVKLTKLDEWVLSRLHSTTKKVRTALDDYQFTNAAREIAALVDEVSNWYVRRSRNRFWESGMNAEKAAAYETLHEVLVTISKLIAPFTPFVAEDIHLNLEGSSVHLADYPVVNESLLQPKLEAEMDAVLQVVELGRSNRNQHSLKVKQPLAELVLLEHNENDMDWESYRDIVMDELNVKAFHVELDETKYTSYQLKLNFKTAGPKFGKNVNAVNGWLKQLSQEEVQNFVSTGRAVYEATPEGEVVVTGEDVLVEKVAKSGFSNTTNGQYTVMLDTNVTEELLQEGVAREFIRAVQEYRKQLNLPVNLRVDIILDTEEELQRTLTNHKDLLEENLLVKQFTFGHLTNEDDELSLGETKLRIKLSAAN</sequence>
<comment type="function">
    <text evidence="1">Catalyzes the attachment of isoleucine to tRNA(Ile). As IleRS can inadvertently accommodate and process structurally similar amino acids such as valine, to avoid such errors it has two additional distinct tRNA(Ile)-dependent editing activities. One activity is designated as 'pretransfer' editing and involves the hydrolysis of activated Val-AMP. The other activity is designated 'posttransfer' editing and involves deacylation of mischarged Val-tRNA(Ile).</text>
</comment>
<comment type="catalytic activity">
    <reaction evidence="1">
        <text>tRNA(Ile) + L-isoleucine + ATP = L-isoleucyl-tRNA(Ile) + AMP + diphosphate</text>
        <dbReference type="Rhea" id="RHEA:11060"/>
        <dbReference type="Rhea" id="RHEA-COMP:9666"/>
        <dbReference type="Rhea" id="RHEA-COMP:9695"/>
        <dbReference type="ChEBI" id="CHEBI:30616"/>
        <dbReference type="ChEBI" id="CHEBI:33019"/>
        <dbReference type="ChEBI" id="CHEBI:58045"/>
        <dbReference type="ChEBI" id="CHEBI:78442"/>
        <dbReference type="ChEBI" id="CHEBI:78528"/>
        <dbReference type="ChEBI" id="CHEBI:456215"/>
        <dbReference type="EC" id="6.1.1.5"/>
    </reaction>
</comment>
<comment type="cofactor">
    <cofactor evidence="1">
        <name>Zn(2+)</name>
        <dbReference type="ChEBI" id="CHEBI:29105"/>
    </cofactor>
</comment>
<comment type="subunit">
    <text evidence="1">Monomer.</text>
</comment>
<comment type="subcellular location">
    <subcellularLocation>
        <location evidence="1">Cytoplasm</location>
    </subcellularLocation>
</comment>
<comment type="domain">
    <text evidence="1">IleRS has two distinct active sites: one for aminoacylation and one for editing. The misactivated valine is translocated from the active site to the editing site, which sterically excludes the correctly activated isoleucine. The single editing site contains two valyl binding pockets, one specific for each substrate (Val-AMP or Val-tRNA(Ile)).</text>
</comment>
<comment type="similarity">
    <text evidence="1">Belongs to the class-I aminoacyl-tRNA synthetase family. IleS type 2 subfamily.</text>
</comment>
<comment type="sequence caution" evidence="2">
    <conflict type="erroneous initiation">
        <sequence resource="EMBL-CDS" id="AAP09130"/>
    </conflict>
</comment>